<evidence type="ECO:0000255" key="1">
    <source>
        <dbReference type="HAMAP-Rule" id="MF_00374"/>
    </source>
</evidence>
<evidence type="ECO:0000305" key="2"/>
<sequence>MKASELRGKDAAGLNQELSELLKAQFSLRMQKATQQLQNTSQLKKVRKDIARVQTVLTQKANAK</sequence>
<gene>
    <name evidence="1" type="primary">rpmC</name>
    <name type="ordered locus">H16_A3476</name>
</gene>
<reference key="1">
    <citation type="journal article" date="2006" name="Nat. Biotechnol.">
        <title>Genome sequence of the bioplastic-producing 'Knallgas' bacterium Ralstonia eutropha H16.</title>
        <authorList>
            <person name="Pohlmann A."/>
            <person name="Fricke W.F."/>
            <person name="Reinecke F."/>
            <person name="Kusian B."/>
            <person name="Liesegang H."/>
            <person name="Cramm R."/>
            <person name="Eitinger T."/>
            <person name="Ewering C."/>
            <person name="Poetter M."/>
            <person name="Schwartz E."/>
            <person name="Strittmatter A."/>
            <person name="Voss I."/>
            <person name="Gottschalk G."/>
            <person name="Steinbuechel A."/>
            <person name="Friedrich B."/>
            <person name="Bowien B."/>
        </authorList>
    </citation>
    <scope>NUCLEOTIDE SEQUENCE [LARGE SCALE GENOMIC DNA]</scope>
    <source>
        <strain>ATCC 17699 / DSM 428 / KCTC 22496 / NCIMB 10442 / H16 / Stanier 337</strain>
    </source>
</reference>
<organism>
    <name type="scientific">Cupriavidus necator (strain ATCC 17699 / DSM 428 / KCTC 22496 / NCIMB 10442 / H16 / Stanier 337)</name>
    <name type="common">Ralstonia eutropha</name>
    <dbReference type="NCBI Taxonomy" id="381666"/>
    <lineage>
        <taxon>Bacteria</taxon>
        <taxon>Pseudomonadati</taxon>
        <taxon>Pseudomonadota</taxon>
        <taxon>Betaproteobacteria</taxon>
        <taxon>Burkholderiales</taxon>
        <taxon>Burkholderiaceae</taxon>
        <taxon>Cupriavidus</taxon>
    </lineage>
</organism>
<keyword id="KW-1185">Reference proteome</keyword>
<keyword id="KW-0687">Ribonucleoprotein</keyword>
<keyword id="KW-0689">Ribosomal protein</keyword>
<dbReference type="EMBL" id="AM260479">
    <property type="protein sequence ID" value="CAJ94544.1"/>
    <property type="molecule type" value="Genomic_DNA"/>
</dbReference>
<dbReference type="RefSeq" id="WP_010812390.1">
    <property type="nucleotide sequence ID" value="NZ_CP039287.1"/>
</dbReference>
<dbReference type="SMR" id="Q0K627"/>
<dbReference type="STRING" id="381666.H16_A3476"/>
<dbReference type="GeneID" id="34310725"/>
<dbReference type="KEGG" id="reh:H16_A3476"/>
<dbReference type="eggNOG" id="COG0255">
    <property type="taxonomic scope" value="Bacteria"/>
</dbReference>
<dbReference type="HOGENOM" id="CLU_158491_1_1_4"/>
<dbReference type="OrthoDB" id="9815192at2"/>
<dbReference type="Proteomes" id="UP000008210">
    <property type="component" value="Chromosome 1"/>
</dbReference>
<dbReference type="GO" id="GO:0022625">
    <property type="term" value="C:cytosolic large ribosomal subunit"/>
    <property type="evidence" value="ECO:0007669"/>
    <property type="project" value="TreeGrafter"/>
</dbReference>
<dbReference type="GO" id="GO:0003735">
    <property type="term" value="F:structural constituent of ribosome"/>
    <property type="evidence" value="ECO:0007669"/>
    <property type="project" value="InterPro"/>
</dbReference>
<dbReference type="GO" id="GO:0006412">
    <property type="term" value="P:translation"/>
    <property type="evidence" value="ECO:0007669"/>
    <property type="project" value="UniProtKB-UniRule"/>
</dbReference>
<dbReference type="CDD" id="cd00427">
    <property type="entry name" value="Ribosomal_L29_HIP"/>
    <property type="match status" value="1"/>
</dbReference>
<dbReference type="FunFam" id="1.10.287.310:FF:000001">
    <property type="entry name" value="50S ribosomal protein L29"/>
    <property type="match status" value="1"/>
</dbReference>
<dbReference type="Gene3D" id="1.10.287.310">
    <property type="match status" value="1"/>
</dbReference>
<dbReference type="HAMAP" id="MF_00374">
    <property type="entry name" value="Ribosomal_uL29"/>
    <property type="match status" value="1"/>
</dbReference>
<dbReference type="InterPro" id="IPR050063">
    <property type="entry name" value="Ribosomal_protein_uL29"/>
</dbReference>
<dbReference type="InterPro" id="IPR001854">
    <property type="entry name" value="Ribosomal_uL29"/>
</dbReference>
<dbReference type="InterPro" id="IPR018254">
    <property type="entry name" value="Ribosomal_uL29_CS"/>
</dbReference>
<dbReference type="InterPro" id="IPR036049">
    <property type="entry name" value="Ribosomal_uL29_sf"/>
</dbReference>
<dbReference type="NCBIfam" id="TIGR00012">
    <property type="entry name" value="L29"/>
    <property type="match status" value="1"/>
</dbReference>
<dbReference type="PANTHER" id="PTHR10916">
    <property type="entry name" value="60S RIBOSOMAL PROTEIN L35/50S RIBOSOMAL PROTEIN L29"/>
    <property type="match status" value="1"/>
</dbReference>
<dbReference type="PANTHER" id="PTHR10916:SF0">
    <property type="entry name" value="LARGE RIBOSOMAL SUBUNIT PROTEIN UL29C"/>
    <property type="match status" value="1"/>
</dbReference>
<dbReference type="Pfam" id="PF00831">
    <property type="entry name" value="Ribosomal_L29"/>
    <property type="match status" value="1"/>
</dbReference>
<dbReference type="SUPFAM" id="SSF46561">
    <property type="entry name" value="Ribosomal protein L29 (L29p)"/>
    <property type="match status" value="1"/>
</dbReference>
<dbReference type="PROSITE" id="PS00579">
    <property type="entry name" value="RIBOSOMAL_L29"/>
    <property type="match status" value="1"/>
</dbReference>
<comment type="similarity">
    <text evidence="1">Belongs to the universal ribosomal protein uL29 family.</text>
</comment>
<protein>
    <recommendedName>
        <fullName evidence="1">Large ribosomal subunit protein uL29</fullName>
    </recommendedName>
    <alternativeName>
        <fullName evidence="2">50S ribosomal protein L29</fullName>
    </alternativeName>
</protein>
<name>RL29_CUPNH</name>
<accession>Q0K627</accession>
<feature type="chain" id="PRO_1000007574" description="Large ribosomal subunit protein uL29">
    <location>
        <begin position="1"/>
        <end position="64"/>
    </location>
</feature>
<proteinExistence type="inferred from homology"/>